<feature type="chain" id="PRO_0000241907" description="Orotidine 5'-phosphate decarboxylase">
    <location>
        <begin position="1"/>
        <end position="245"/>
    </location>
</feature>
<feature type="active site" description="Proton donor" evidence="1">
    <location>
        <position position="73"/>
    </location>
</feature>
<feature type="binding site" evidence="1">
    <location>
        <position position="22"/>
    </location>
    <ligand>
        <name>substrate</name>
    </ligand>
</feature>
<feature type="binding site" evidence="1">
    <location>
        <position position="44"/>
    </location>
    <ligand>
        <name>substrate</name>
    </ligand>
</feature>
<feature type="binding site" evidence="1">
    <location>
        <begin position="71"/>
        <end position="80"/>
    </location>
    <ligand>
        <name>substrate</name>
    </ligand>
</feature>
<feature type="binding site" evidence="1">
    <location>
        <position position="131"/>
    </location>
    <ligand>
        <name>substrate</name>
    </ligand>
</feature>
<feature type="binding site" evidence="1">
    <location>
        <position position="192"/>
    </location>
    <ligand>
        <name>substrate</name>
    </ligand>
</feature>
<feature type="binding site" evidence="1">
    <location>
        <position position="201"/>
    </location>
    <ligand>
        <name>substrate</name>
    </ligand>
</feature>
<feature type="binding site" evidence="1">
    <location>
        <position position="221"/>
    </location>
    <ligand>
        <name>substrate</name>
    </ligand>
</feature>
<feature type="binding site" evidence="1">
    <location>
        <position position="222"/>
    </location>
    <ligand>
        <name>substrate</name>
    </ligand>
</feature>
<keyword id="KW-0210">Decarboxylase</keyword>
<keyword id="KW-0456">Lyase</keyword>
<keyword id="KW-0665">Pyrimidine biosynthesis</keyword>
<keyword id="KW-1185">Reference proteome</keyword>
<accession>Q3Z131</accession>
<reference key="1">
    <citation type="journal article" date="2005" name="Nucleic Acids Res.">
        <title>Genome dynamics and diversity of Shigella species, the etiologic agents of bacillary dysentery.</title>
        <authorList>
            <person name="Yang F."/>
            <person name="Yang J."/>
            <person name="Zhang X."/>
            <person name="Chen L."/>
            <person name="Jiang Y."/>
            <person name="Yan Y."/>
            <person name="Tang X."/>
            <person name="Wang J."/>
            <person name="Xiong Z."/>
            <person name="Dong J."/>
            <person name="Xue Y."/>
            <person name="Zhu Y."/>
            <person name="Xu X."/>
            <person name="Sun L."/>
            <person name="Chen S."/>
            <person name="Nie H."/>
            <person name="Peng J."/>
            <person name="Xu J."/>
            <person name="Wang Y."/>
            <person name="Yuan Z."/>
            <person name="Wen Y."/>
            <person name="Yao Z."/>
            <person name="Shen Y."/>
            <person name="Qiang B."/>
            <person name="Hou Y."/>
            <person name="Yu J."/>
            <person name="Jin Q."/>
        </authorList>
    </citation>
    <scope>NUCLEOTIDE SEQUENCE [LARGE SCALE GENOMIC DNA]</scope>
    <source>
        <strain>Ss046</strain>
    </source>
</reference>
<gene>
    <name evidence="1" type="primary">pyrF</name>
    <name type="ordered locus">SSON_1859</name>
</gene>
<name>PYRF_SHISS</name>
<dbReference type="EC" id="4.1.1.23" evidence="1"/>
<dbReference type="EMBL" id="CP000038">
    <property type="protein sequence ID" value="AAZ88531.1"/>
    <property type="molecule type" value="Genomic_DNA"/>
</dbReference>
<dbReference type="RefSeq" id="WP_000176278.1">
    <property type="nucleotide sequence ID" value="NC_007384.1"/>
</dbReference>
<dbReference type="SMR" id="Q3Z131"/>
<dbReference type="GeneID" id="93775404"/>
<dbReference type="KEGG" id="ssn:SSON_1859"/>
<dbReference type="HOGENOM" id="CLU_067069_0_0_6"/>
<dbReference type="UniPathway" id="UPA00070">
    <property type="reaction ID" value="UER00120"/>
</dbReference>
<dbReference type="Proteomes" id="UP000002529">
    <property type="component" value="Chromosome"/>
</dbReference>
<dbReference type="GO" id="GO:0005829">
    <property type="term" value="C:cytosol"/>
    <property type="evidence" value="ECO:0007669"/>
    <property type="project" value="TreeGrafter"/>
</dbReference>
<dbReference type="GO" id="GO:0004590">
    <property type="term" value="F:orotidine-5'-phosphate decarboxylase activity"/>
    <property type="evidence" value="ECO:0007669"/>
    <property type="project" value="UniProtKB-UniRule"/>
</dbReference>
<dbReference type="GO" id="GO:0006207">
    <property type="term" value="P:'de novo' pyrimidine nucleobase biosynthetic process"/>
    <property type="evidence" value="ECO:0007669"/>
    <property type="project" value="InterPro"/>
</dbReference>
<dbReference type="GO" id="GO:0044205">
    <property type="term" value="P:'de novo' UMP biosynthetic process"/>
    <property type="evidence" value="ECO:0007669"/>
    <property type="project" value="UniProtKB-UniRule"/>
</dbReference>
<dbReference type="CDD" id="cd04725">
    <property type="entry name" value="OMP_decarboxylase_like"/>
    <property type="match status" value="1"/>
</dbReference>
<dbReference type="FunFam" id="3.20.20.70:FF:000015">
    <property type="entry name" value="Orotidine 5'-phosphate decarboxylase"/>
    <property type="match status" value="1"/>
</dbReference>
<dbReference type="Gene3D" id="3.20.20.70">
    <property type="entry name" value="Aldolase class I"/>
    <property type="match status" value="1"/>
</dbReference>
<dbReference type="HAMAP" id="MF_01200_B">
    <property type="entry name" value="OMPdecase_type1_B"/>
    <property type="match status" value="1"/>
</dbReference>
<dbReference type="InterPro" id="IPR013785">
    <property type="entry name" value="Aldolase_TIM"/>
</dbReference>
<dbReference type="InterPro" id="IPR014732">
    <property type="entry name" value="OMPdecase"/>
</dbReference>
<dbReference type="InterPro" id="IPR018089">
    <property type="entry name" value="OMPdecase_AS"/>
</dbReference>
<dbReference type="InterPro" id="IPR047596">
    <property type="entry name" value="OMPdecase_bac"/>
</dbReference>
<dbReference type="InterPro" id="IPR001754">
    <property type="entry name" value="OMPdeCOase_dom"/>
</dbReference>
<dbReference type="InterPro" id="IPR011060">
    <property type="entry name" value="RibuloseP-bd_barrel"/>
</dbReference>
<dbReference type="NCBIfam" id="NF001273">
    <property type="entry name" value="PRK00230.1"/>
    <property type="match status" value="1"/>
</dbReference>
<dbReference type="NCBIfam" id="TIGR01740">
    <property type="entry name" value="pyrF"/>
    <property type="match status" value="1"/>
</dbReference>
<dbReference type="PANTHER" id="PTHR32119">
    <property type="entry name" value="OROTIDINE 5'-PHOSPHATE DECARBOXYLASE"/>
    <property type="match status" value="1"/>
</dbReference>
<dbReference type="PANTHER" id="PTHR32119:SF2">
    <property type="entry name" value="OROTIDINE 5'-PHOSPHATE DECARBOXYLASE"/>
    <property type="match status" value="1"/>
</dbReference>
<dbReference type="Pfam" id="PF00215">
    <property type="entry name" value="OMPdecase"/>
    <property type="match status" value="1"/>
</dbReference>
<dbReference type="SMART" id="SM00934">
    <property type="entry name" value="OMPdecase"/>
    <property type="match status" value="1"/>
</dbReference>
<dbReference type="SUPFAM" id="SSF51366">
    <property type="entry name" value="Ribulose-phoshate binding barrel"/>
    <property type="match status" value="1"/>
</dbReference>
<dbReference type="PROSITE" id="PS00156">
    <property type="entry name" value="OMPDECASE"/>
    <property type="match status" value="1"/>
</dbReference>
<organism>
    <name type="scientific">Shigella sonnei (strain Ss046)</name>
    <dbReference type="NCBI Taxonomy" id="300269"/>
    <lineage>
        <taxon>Bacteria</taxon>
        <taxon>Pseudomonadati</taxon>
        <taxon>Pseudomonadota</taxon>
        <taxon>Gammaproteobacteria</taxon>
        <taxon>Enterobacterales</taxon>
        <taxon>Enterobacteriaceae</taxon>
        <taxon>Shigella</taxon>
    </lineage>
</organism>
<protein>
    <recommendedName>
        <fullName evidence="1">Orotidine 5'-phosphate decarboxylase</fullName>
        <ecNumber evidence="1">4.1.1.23</ecNumber>
    </recommendedName>
    <alternativeName>
        <fullName evidence="1">OMP decarboxylase</fullName>
        <shortName evidence="1">OMPDCase</shortName>
        <shortName evidence="1">OMPdecase</shortName>
    </alternativeName>
</protein>
<sequence length="245" mass="26366">MTLTASSSSRAVTNSPVVVALDYHNRDDALSFVDKIDPRDCRLKVGKEMFTLFGPQFVRELQQRGFDIFLDLKFHDIPNTAAHAVAAAADLGVWMVNVHASGGARMMTAAREALVPFGKDAPLLIAVTVLTSMEASDLVDLGMTLSPADYAERLAALTQKCGLDGVVCSAQEAVRFKQVFGQEFKLVTPGIRPQGSEAGDQRRIMTPEQALSAGVDYMVIGRPVTQSVDPAQTLKAINASLQRSA</sequence>
<proteinExistence type="inferred from homology"/>
<comment type="function">
    <text evidence="1">Catalyzes the decarboxylation of orotidine 5'-monophosphate (OMP) to uridine 5'-monophosphate (UMP).</text>
</comment>
<comment type="catalytic activity">
    <reaction evidence="1">
        <text>orotidine 5'-phosphate + H(+) = UMP + CO2</text>
        <dbReference type="Rhea" id="RHEA:11596"/>
        <dbReference type="ChEBI" id="CHEBI:15378"/>
        <dbReference type="ChEBI" id="CHEBI:16526"/>
        <dbReference type="ChEBI" id="CHEBI:57538"/>
        <dbReference type="ChEBI" id="CHEBI:57865"/>
        <dbReference type="EC" id="4.1.1.23"/>
    </reaction>
</comment>
<comment type="pathway">
    <text evidence="1">Pyrimidine metabolism; UMP biosynthesis via de novo pathway; UMP from orotate: step 2/2.</text>
</comment>
<comment type="subunit">
    <text evidence="1">Homodimer.</text>
</comment>
<comment type="similarity">
    <text evidence="1">Belongs to the OMP decarboxylase family. Type 1 subfamily.</text>
</comment>
<evidence type="ECO:0000255" key="1">
    <source>
        <dbReference type="HAMAP-Rule" id="MF_01200"/>
    </source>
</evidence>